<reference key="1">
    <citation type="journal article" date="1999" name="J. Biol. Chem.">
        <title>Rat peroxisome proliferator-activated receptors and brown adipose tissue function during cold acclimatization.</title>
        <authorList>
            <person name="Guardiola-Diaz H.M."/>
            <person name="Rehnmark S."/>
            <person name="Usuda N."/>
            <person name="Albrektsen T."/>
            <person name="Feltkamp D."/>
            <person name="Gustafsson J.-A."/>
            <person name="Alexson S.E.H."/>
        </authorList>
    </citation>
    <scope>NUCLEOTIDE SEQUENCE [MRNA] (ISOFORMS 1 AND 2)</scope>
    <source>
        <strain>Sprague-Dawley</strain>
        <tissue>Brown adipose tissue</tissue>
    </source>
</reference>
<reference key="2">
    <citation type="submission" date="1998-08" db="EMBL/GenBank/DDBJ databases">
        <title>Down-regulation of PPAR gammma.</title>
        <authorList>
            <person name="Tanaka T."/>
            <person name="Itoh H."/>
        </authorList>
    </citation>
    <scope>NUCLEOTIDE SEQUENCE [MRNA] (ISOFORM 2)</scope>
    <source>
        <strain>Sprague-Dawley</strain>
        <tissue>Adipose tissue</tissue>
    </source>
</reference>
<reference key="3">
    <citation type="submission" date="2001-01" db="EMBL/GenBank/DDBJ databases">
        <authorList>
            <person name="Escher P."/>
        </authorList>
    </citation>
    <scope>NUCLEOTIDE SEQUENCE [MRNA] (ISOFORM 2)</scope>
</reference>
<reference key="4">
    <citation type="submission" date="1998-02" db="EMBL/GenBank/DDBJ databases">
        <title>Molecular cloning of rat PPAR-gamma gene.</title>
        <authorList>
            <person name="Miyakita A."/>
            <person name="Okuno S."/>
            <person name="Watanabe T.K."/>
            <person name="Oga K."/>
            <person name="Tsuji A."/>
            <person name="Hishigaki H."/>
            <person name="Suto T."/>
            <person name="Nakagawa K."/>
            <person name="Nakahara Y."/>
            <person name="Higashi K."/>
        </authorList>
    </citation>
    <scope>NUCLEOTIDE SEQUENCE [MRNA] (ISOFORM 1)</scope>
    <source>
        <tissue>Adipocyte</tissue>
    </source>
</reference>
<reference key="5">
    <citation type="journal article" date="2000" name="J. Neurosci. Res.">
        <title>Photoreceptor phagocytosis selectively activates PPARgamma expression in retinal pigment epithelial cells.</title>
        <authorList>
            <person name="Ershov A.V."/>
            <person name="Bazan N.G."/>
        </authorList>
    </citation>
    <scope>NUCLEOTIDE SEQUENCE [MRNA] (ISOFORM 1)</scope>
    <source>
        <strain>Long Evans</strain>
    </source>
</reference>
<reference key="6">
    <citation type="journal article" date="1996" name="Science">
        <title>Inhibition of adipogenesis through MAP kinase-mediated phosphorylation of PPARgamma.</title>
        <authorList>
            <person name="Hu E."/>
            <person name="Kim J.B."/>
            <person name="Sarraf P."/>
            <person name="Spiegelman B.M."/>
        </authorList>
    </citation>
    <scope>PHOSPHORYLATION</scope>
</reference>
<reference key="7">
    <citation type="journal article" date="1997" name="J. Biol. Chem.">
        <title>Transcriptional activation by peroxisome proliferator-activated receptor gamma is inhibited by phosphorylation at a consensus mitogen-activated protein kinase site.</title>
        <authorList>
            <person name="Adams M."/>
            <person name="Reginato M.J."/>
            <person name="Shao D."/>
            <person name="Lazar M.A."/>
            <person name="Chatterjee V.K."/>
        </authorList>
    </citation>
    <scope>PHOSPHORYLATION AT SER-112</scope>
    <scope>MUTAGENESIS OF SER-112</scope>
</reference>
<reference key="8">
    <citation type="journal article" date="1996" name="J. Biol. Chem.">
        <title>Insulin- and mitogen-activated protein kinase-mediated phosphorylation and activation of peroxisome proliferator-activated receptor gamma.</title>
        <authorList>
            <person name="Zhang B."/>
            <person name="Berger J."/>
            <person name="Zhou G."/>
            <person name="Elbrecht A."/>
            <person name="Biswas S."/>
            <person name="White-Carrington S."/>
            <person name="Szalkowski D."/>
            <person name="Moller D.E."/>
        </authorList>
    </citation>
    <scope>PHOSPHORYLATION</scope>
</reference>
<feature type="chain" id="PRO_0000053497" description="Peroxisome proliferator-activated receptor gamma">
    <location>
        <begin position="1"/>
        <end position="505"/>
    </location>
</feature>
<feature type="domain" description="NR LBD" evidence="5">
    <location>
        <begin position="238"/>
        <end position="503"/>
    </location>
</feature>
<feature type="DNA-binding region" description="Nuclear receptor" evidence="4">
    <location>
        <begin position="136"/>
        <end position="210"/>
    </location>
</feature>
<feature type="zinc finger region" description="NR C4-type" evidence="4">
    <location>
        <begin position="139"/>
        <end position="159"/>
    </location>
</feature>
<feature type="zinc finger region" description="NR C4-type" evidence="4">
    <location>
        <begin position="176"/>
        <end position="198"/>
    </location>
</feature>
<feature type="region of interest" description="Interaction with FAM120B" evidence="1">
    <location>
        <begin position="205"/>
        <end position="280"/>
    </location>
</feature>
<feature type="short sequence motif" description="9aaTAD" evidence="2">
    <location>
        <begin position="495"/>
        <end position="503"/>
    </location>
</feature>
<feature type="modified residue" description="Phosphoserine; by MAPK" evidence="8">
    <location>
        <position position="112"/>
    </location>
</feature>
<feature type="glycosylation site" description="O-linked (GlcNAc) threonine" evidence="1">
    <location>
        <position position="84"/>
    </location>
</feature>
<feature type="cross-link" description="Glycyl lysine isopeptide (Lys-Gly) (interchain with G-Cter in ubiquitin)" evidence="2">
    <location>
        <position position="252"/>
    </location>
</feature>
<feature type="splice variant" id="VSP_003649" description="In isoform 1." evidence="9 10 11">
    <location>
        <begin position="1"/>
        <end position="30"/>
    </location>
</feature>
<feature type="mutagenesis site" description="Increases adipogenic activity." evidence="8">
    <original>S</original>
    <variation>A</variation>
    <location>
        <position position="112"/>
    </location>
</feature>
<feature type="sequence conflict" description="In Ref. 3; CAA73382." evidence="12" ref="3">
    <original>A</original>
    <variation>R</variation>
    <location>
        <position position="111"/>
    </location>
</feature>
<dbReference type="EMBL" id="AF156666">
    <property type="protein sequence ID" value="AAD40119.1"/>
    <property type="molecule type" value="mRNA"/>
</dbReference>
<dbReference type="EMBL" id="AF156665">
    <property type="protein sequence ID" value="AAD40118.1"/>
    <property type="molecule type" value="mRNA"/>
</dbReference>
<dbReference type="EMBL" id="AB019561">
    <property type="protein sequence ID" value="BAA36485.1"/>
    <property type="molecule type" value="mRNA"/>
</dbReference>
<dbReference type="EMBL" id="Y12882">
    <property type="protein sequence ID" value="CAA73382.2"/>
    <property type="molecule type" value="mRNA"/>
</dbReference>
<dbReference type="EMBL" id="AB011365">
    <property type="protein sequence ID" value="BAA32540.1"/>
    <property type="molecule type" value="mRNA"/>
</dbReference>
<dbReference type="EMBL" id="AF246457">
    <property type="protein sequence ID" value="AAF63385.1"/>
    <property type="molecule type" value="mRNA"/>
</dbReference>
<dbReference type="EMBL" id="AF246458">
    <property type="protein sequence ID" value="AAF63386.1"/>
    <property type="molecule type" value="mRNA"/>
</dbReference>
<dbReference type="RefSeq" id="NP_001138838.1">
    <molecule id="O88275-2"/>
    <property type="nucleotide sequence ID" value="NM_001145366.1"/>
</dbReference>
<dbReference type="RefSeq" id="NP_001138839.1">
    <molecule id="O88275-2"/>
    <property type="nucleotide sequence ID" value="NM_001145367.1"/>
</dbReference>
<dbReference type="RefSeq" id="NP_037256.1">
    <molecule id="O88275-1"/>
    <property type="nucleotide sequence ID" value="NM_013124.3"/>
</dbReference>
<dbReference type="RefSeq" id="XP_006237071.1">
    <molecule id="O88275-2"/>
    <property type="nucleotide sequence ID" value="XM_006237009.5"/>
</dbReference>
<dbReference type="RefSeq" id="XP_038963058.1">
    <molecule id="O88275-2"/>
    <property type="nucleotide sequence ID" value="XM_039107130.2"/>
</dbReference>
<dbReference type="BMRB" id="O88275"/>
<dbReference type="SMR" id="O88275"/>
<dbReference type="CORUM" id="O88275"/>
<dbReference type="FunCoup" id="O88275">
    <property type="interactions" value="202"/>
</dbReference>
<dbReference type="STRING" id="10116.ENSRNOP00000012137"/>
<dbReference type="BindingDB" id="O88275"/>
<dbReference type="ChEMBL" id="CHEMBL4797"/>
<dbReference type="DrugCentral" id="O88275"/>
<dbReference type="GlyCosmos" id="O88275">
    <property type="glycosylation" value="1 site, No reported glycans"/>
</dbReference>
<dbReference type="GlyGen" id="O88275">
    <property type="glycosylation" value="1 site"/>
</dbReference>
<dbReference type="iPTMnet" id="O88275"/>
<dbReference type="PhosphoSitePlus" id="O88275"/>
<dbReference type="PaxDb" id="10116-ENSRNOP00000012137"/>
<dbReference type="Ensembl" id="ENSRNOT00000012137.6">
    <molecule id="O88275-1"/>
    <property type="protein sequence ID" value="ENSRNOP00000012137.3"/>
    <property type="gene ID" value="ENSRNOG00000008839.8"/>
</dbReference>
<dbReference type="Ensembl" id="ENSRNOT00000082969.2">
    <molecule id="O88275-2"/>
    <property type="protein sequence ID" value="ENSRNOP00000073235.1"/>
    <property type="gene ID" value="ENSRNOG00000008839.8"/>
</dbReference>
<dbReference type="GeneID" id="25664"/>
<dbReference type="KEGG" id="rno:25664"/>
<dbReference type="UCSC" id="RGD:3371">
    <molecule id="O88275-1"/>
    <property type="organism name" value="rat"/>
</dbReference>
<dbReference type="AGR" id="RGD:3371"/>
<dbReference type="CTD" id="5468"/>
<dbReference type="RGD" id="3371">
    <property type="gene designation" value="Pparg"/>
</dbReference>
<dbReference type="eggNOG" id="KOG3575">
    <property type="taxonomic scope" value="Eukaryota"/>
</dbReference>
<dbReference type="GeneTree" id="ENSGT00940000158273"/>
<dbReference type="InParanoid" id="O88275"/>
<dbReference type="OMA" id="EMPFWPL"/>
<dbReference type="OrthoDB" id="7634782at2759"/>
<dbReference type="PhylomeDB" id="O88275"/>
<dbReference type="TreeFam" id="TF316304"/>
<dbReference type="Reactome" id="R-RNO-381340">
    <property type="pathway name" value="Transcriptional regulation of white adipocyte differentiation"/>
</dbReference>
<dbReference type="Reactome" id="R-RNO-383280">
    <property type="pathway name" value="Nuclear Receptor transcription pathway"/>
</dbReference>
<dbReference type="Reactome" id="R-RNO-9841922">
    <property type="pathway name" value="MLL4 and MLL3 complexes regulate expression of PPARG target genes in adipogenesis and hepatic steatosis"/>
</dbReference>
<dbReference type="PRO" id="PR:O88275"/>
<dbReference type="Proteomes" id="UP000002494">
    <property type="component" value="Chromosome 4"/>
</dbReference>
<dbReference type="Bgee" id="ENSRNOG00000008839">
    <property type="expression patterns" value="Expressed in duodenum and 18 other cell types or tissues"/>
</dbReference>
<dbReference type="GO" id="GO:0005737">
    <property type="term" value="C:cytoplasm"/>
    <property type="evidence" value="ECO:0000266"/>
    <property type="project" value="RGD"/>
</dbReference>
<dbReference type="GO" id="GO:0005829">
    <property type="term" value="C:cytosol"/>
    <property type="evidence" value="ECO:0000266"/>
    <property type="project" value="RGD"/>
</dbReference>
<dbReference type="GO" id="GO:0005654">
    <property type="term" value="C:nucleoplasm"/>
    <property type="evidence" value="ECO:0007669"/>
    <property type="project" value="Ensembl"/>
</dbReference>
<dbReference type="GO" id="GO:0005634">
    <property type="term" value="C:nucleus"/>
    <property type="evidence" value="ECO:0000266"/>
    <property type="project" value="RGD"/>
</dbReference>
<dbReference type="GO" id="GO:0048471">
    <property type="term" value="C:perinuclear region of cytoplasm"/>
    <property type="evidence" value="ECO:0000314"/>
    <property type="project" value="RGD"/>
</dbReference>
<dbReference type="GO" id="GO:0043235">
    <property type="term" value="C:receptor complex"/>
    <property type="evidence" value="ECO:0000266"/>
    <property type="project" value="RGD"/>
</dbReference>
<dbReference type="GO" id="GO:0090575">
    <property type="term" value="C:RNA polymerase II transcription regulator complex"/>
    <property type="evidence" value="ECO:0000266"/>
    <property type="project" value="RGD"/>
</dbReference>
<dbReference type="GO" id="GO:0106068">
    <property type="term" value="C:SUMO ligase complex"/>
    <property type="evidence" value="ECO:0000266"/>
    <property type="project" value="RGD"/>
</dbReference>
<dbReference type="GO" id="GO:0051393">
    <property type="term" value="F:alpha-actinin binding"/>
    <property type="evidence" value="ECO:0000266"/>
    <property type="project" value="RGD"/>
</dbReference>
<dbReference type="GO" id="GO:0050544">
    <property type="term" value="F:arachidonate binding"/>
    <property type="evidence" value="ECO:0000266"/>
    <property type="project" value="RGD"/>
</dbReference>
<dbReference type="GO" id="GO:0003682">
    <property type="term" value="F:chromatin binding"/>
    <property type="evidence" value="ECO:0000250"/>
    <property type="project" value="UniProtKB"/>
</dbReference>
<dbReference type="GO" id="GO:0003677">
    <property type="term" value="F:DNA binding"/>
    <property type="evidence" value="ECO:0000314"/>
    <property type="project" value="RGD"/>
</dbReference>
<dbReference type="GO" id="GO:0050692">
    <property type="term" value="F:DNA binding domain binding"/>
    <property type="evidence" value="ECO:0000266"/>
    <property type="project" value="RGD"/>
</dbReference>
<dbReference type="GO" id="GO:0001228">
    <property type="term" value="F:DNA-binding transcription activator activity, RNA polymerase II-specific"/>
    <property type="evidence" value="ECO:0000266"/>
    <property type="project" value="RGD"/>
</dbReference>
<dbReference type="GO" id="GO:0003700">
    <property type="term" value="F:DNA-binding transcription factor activity"/>
    <property type="evidence" value="ECO:0000314"/>
    <property type="project" value="BHF-UCL"/>
</dbReference>
<dbReference type="GO" id="GO:0140297">
    <property type="term" value="F:DNA-binding transcription factor binding"/>
    <property type="evidence" value="ECO:0000266"/>
    <property type="project" value="RGD"/>
</dbReference>
<dbReference type="GO" id="GO:0001227">
    <property type="term" value="F:DNA-binding transcription repressor activity, RNA polymerase II-specific"/>
    <property type="evidence" value="ECO:0000318"/>
    <property type="project" value="GO_Central"/>
</dbReference>
<dbReference type="GO" id="GO:0003690">
    <property type="term" value="F:double-stranded DNA binding"/>
    <property type="evidence" value="ECO:0000266"/>
    <property type="project" value="RGD"/>
</dbReference>
<dbReference type="GO" id="GO:0070888">
    <property type="term" value="F:E-box binding"/>
    <property type="evidence" value="ECO:0000250"/>
    <property type="project" value="UniProtKB"/>
</dbReference>
<dbReference type="GO" id="GO:0019899">
    <property type="term" value="F:enzyme binding"/>
    <property type="evidence" value="ECO:0000266"/>
    <property type="project" value="RGD"/>
</dbReference>
<dbReference type="GO" id="GO:0042802">
    <property type="term" value="F:identical protein binding"/>
    <property type="evidence" value="ECO:0000266"/>
    <property type="project" value="RGD"/>
</dbReference>
<dbReference type="GO" id="GO:0050693">
    <property type="term" value="F:LBD domain binding"/>
    <property type="evidence" value="ECO:0000266"/>
    <property type="project" value="RGD"/>
</dbReference>
<dbReference type="GO" id="GO:0030331">
    <property type="term" value="F:nuclear estrogen receptor binding"/>
    <property type="evidence" value="ECO:0000353"/>
    <property type="project" value="RGD"/>
</dbReference>
<dbReference type="GO" id="GO:0004879">
    <property type="term" value="F:nuclear receptor activity"/>
    <property type="evidence" value="ECO:0000250"/>
    <property type="project" value="UniProtKB"/>
</dbReference>
<dbReference type="GO" id="GO:0046965">
    <property type="term" value="F:nuclear retinoid X receptor binding"/>
    <property type="evidence" value="ECO:0000266"/>
    <property type="project" value="RGD"/>
</dbReference>
<dbReference type="GO" id="GO:0003676">
    <property type="term" value="F:nucleic acid binding"/>
    <property type="evidence" value="ECO:0000266"/>
    <property type="project" value="RGD"/>
</dbReference>
<dbReference type="GO" id="GO:0042277">
    <property type="term" value="F:peptide binding"/>
    <property type="evidence" value="ECO:0000266"/>
    <property type="project" value="RGD"/>
</dbReference>
<dbReference type="GO" id="GO:1990841">
    <property type="term" value="F:promoter-specific chromatin binding"/>
    <property type="evidence" value="ECO:0000266"/>
    <property type="project" value="RGD"/>
</dbReference>
<dbReference type="GO" id="GO:0019903">
    <property type="term" value="F:protein phosphatase binding"/>
    <property type="evidence" value="ECO:0000314"/>
    <property type="project" value="RGD"/>
</dbReference>
<dbReference type="GO" id="GO:0070412">
    <property type="term" value="F:R-SMAD binding"/>
    <property type="evidence" value="ECO:0000266"/>
    <property type="project" value="RGD"/>
</dbReference>
<dbReference type="GO" id="GO:0000978">
    <property type="term" value="F:RNA polymerase II cis-regulatory region sequence-specific DNA binding"/>
    <property type="evidence" value="ECO:0000266"/>
    <property type="project" value="RGD"/>
</dbReference>
<dbReference type="GO" id="GO:0000979">
    <property type="term" value="F:RNA polymerase II core promoter sequence-specific DNA binding"/>
    <property type="evidence" value="ECO:0000266"/>
    <property type="project" value="RGD"/>
</dbReference>
<dbReference type="GO" id="GO:0000977">
    <property type="term" value="F:RNA polymerase II transcription regulatory region sequence-specific DNA binding"/>
    <property type="evidence" value="ECO:0000266"/>
    <property type="project" value="RGD"/>
</dbReference>
<dbReference type="GO" id="GO:0043565">
    <property type="term" value="F:sequence-specific DNA binding"/>
    <property type="evidence" value="ECO:0000266"/>
    <property type="project" value="RGD"/>
</dbReference>
<dbReference type="GO" id="GO:0097677">
    <property type="term" value="F:STAT family protein binding"/>
    <property type="evidence" value="ECO:0000266"/>
    <property type="project" value="RGD"/>
</dbReference>
<dbReference type="GO" id="GO:0000976">
    <property type="term" value="F:transcription cis-regulatory region binding"/>
    <property type="evidence" value="ECO:0000314"/>
    <property type="project" value="BHF-UCL"/>
</dbReference>
<dbReference type="GO" id="GO:0001223">
    <property type="term" value="F:transcription coactivator binding"/>
    <property type="evidence" value="ECO:0000353"/>
    <property type="project" value="RGD"/>
</dbReference>
<dbReference type="GO" id="GO:0001221">
    <property type="term" value="F:transcription coregulator binding"/>
    <property type="evidence" value="ECO:0000266"/>
    <property type="project" value="RGD"/>
</dbReference>
<dbReference type="GO" id="GO:0050699">
    <property type="term" value="F:WW domain binding"/>
    <property type="evidence" value="ECO:0000266"/>
    <property type="project" value="RGD"/>
</dbReference>
<dbReference type="GO" id="GO:0008270">
    <property type="term" value="F:zinc ion binding"/>
    <property type="evidence" value="ECO:0000266"/>
    <property type="project" value="RGD"/>
</dbReference>
<dbReference type="GO" id="GO:0031100">
    <property type="term" value="P:animal organ regeneration"/>
    <property type="evidence" value="ECO:0000270"/>
    <property type="project" value="RGD"/>
</dbReference>
<dbReference type="GO" id="GO:0030509">
    <property type="term" value="P:BMP signaling pathway"/>
    <property type="evidence" value="ECO:0000266"/>
    <property type="project" value="RGD"/>
</dbReference>
<dbReference type="GO" id="GO:0050873">
    <property type="term" value="P:brown fat cell differentiation"/>
    <property type="evidence" value="ECO:0000266"/>
    <property type="project" value="RGD"/>
</dbReference>
<dbReference type="GO" id="GO:0030154">
    <property type="term" value="P:cell differentiation"/>
    <property type="evidence" value="ECO:0000318"/>
    <property type="project" value="GO_Central"/>
</dbReference>
<dbReference type="GO" id="GO:0045165">
    <property type="term" value="P:cell fate commitment"/>
    <property type="evidence" value="ECO:0000266"/>
    <property type="project" value="RGD"/>
</dbReference>
<dbReference type="GO" id="GO:0048469">
    <property type="term" value="P:cell maturation"/>
    <property type="evidence" value="ECO:0000266"/>
    <property type="project" value="RGD"/>
</dbReference>
<dbReference type="GO" id="GO:0008283">
    <property type="term" value="P:cell population proliferation"/>
    <property type="evidence" value="ECO:0000266"/>
    <property type="project" value="RGD"/>
</dbReference>
<dbReference type="GO" id="GO:0071455">
    <property type="term" value="P:cellular response to hyperoxia"/>
    <property type="evidence" value="ECO:0000270"/>
    <property type="project" value="RGD"/>
</dbReference>
<dbReference type="GO" id="GO:0071456">
    <property type="term" value="P:cellular response to hypoxia"/>
    <property type="evidence" value="ECO:0000314"/>
    <property type="project" value="BHF-UCL"/>
</dbReference>
<dbReference type="GO" id="GO:0032869">
    <property type="term" value="P:cellular response to insulin stimulus"/>
    <property type="evidence" value="ECO:0000250"/>
    <property type="project" value="UniProtKB"/>
</dbReference>
<dbReference type="GO" id="GO:0071285">
    <property type="term" value="P:cellular response to lithium ion"/>
    <property type="evidence" value="ECO:0000266"/>
    <property type="project" value="RGD"/>
</dbReference>
<dbReference type="GO" id="GO:0071404">
    <property type="term" value="P:cellular response to low-density lipoprotein particle stimulus"/>
    <property type="evidence" value="ECO:0000266"/>
    <property type="project" value="RGD"/>
</dbReference>
<dbReference type="GO" id="GO:0036120">
    <property type="term" value="P:cellular response to platelet-derived growth factor stimulus"/>
    <property type="evidence" value="ECO:0000266"/>
    <property type="project" value="RGD"/>
</dbReference>
<dbReference type="GO" id="GO:0071380">
    <property type="term" value="P:cellular response to prostaglandin E stimulus"/>
    <property type="evidence" value="ECO:0000270"/>
    <property type="project" value="RGD"/>
</dbReference>
<dbReference type="GO" id="GO:0071379">
    <property type="term" value="P:cellular response to prostaglandin stimulus"/>
    <property type="evidence" value="ECO:0000270"/>
    <property type="project" value="RGD"/>
</dbReference>
<dbReference type="GO" id="GO:0071300">
    <property type="term" value="P:cellular response to retinoic acid"/>
    <property type="evidence" value="ECO:0000270"/>
    <property type="project" value="RGD"/>
</dbReference>
<dbReference type="GO" id="GO:0071306">
    <property type="term" value="P:cellular response to vitamin E"/>
    <property type="evidence" value="ECO:0000270"/>
    <property type="project" value="RGD"/>
</dbReference>
<dbReference type="GO" id="GO:0106106">
    <property type="term" value="P:cold-induced thermogenesis"/>
    <property type="evidence" value="ECO:0000266"/>
    <property type="project" value="RGD"/>
</dbReference>
<dbReference type="GO" id="GO:0002024">
    <property type="term" value="P:diet induced thermogenesis"/>
    <property type="evidence" value="ECO:0000266"/>
    <property type="project" value="RGD"/>
</dbReference>
<dbReference type="GO" id="GO:0030855">
    <property type="term" value="P:epithelial cell differentiation"/>
    <property type="evidence" value="ECO:0000266"/>
    <property type="project" value="RGD"/>
</dbReference>
<dbReference type="GO" id="GO:0050673">
    <property type="term" value="P:epithelial cell proliferation"/>
    <property type="evidence" value="ECO:0000266"/>
    <property type="project" value="RGD"/>
</dbReference>
<dbReference type="GO" id="GO:0045444">
    <property type="term" value="P:fat cell differentiation"/>
    <property type="evidence" value="ECO:0000266"/>
    <property type="project" value="RGD"/>
</dbReference>
<dbReference type="GO" id="GO:0006631">
    <property type="term" value="P:fatty acid metabolic process"/>
    <property type="evidence" value="ECO:0000318"/>
    <property type="project" value="GO_Central"/>
</dbReference>
<dbReference type="GO" id="GO:0019395">
    <property type="term" value="P:fatty acid oxidation"/>
    <property type="evidence" value="ECO:0000315"/>
    <property type="project" value="RGD"/>
</dbReference>
<dbReference type="GO" id="GO:0042593">
    <property type="term" value="P:glucose homeostasis"/>
    <property type="evidence" value="ECO:0000266"/>
    <property type="project" value="RGD"/>
</dbReference>
<dbReference type="GO" id="GO:0007507">
    <property type="term" value="P:heart development"/>
    <property type="evidence" value="ECO:0000270"/>
    <property type="project" value="RGD"/>
</dbReference>
<dbReference type="GO" id="GO:0009755">
    <property type="term" value="P:hormone-mediated signaling pathway"/>
    <property type="evidence" value="ECO:0000318"/>
    <property type="project" value="GO_Central"/>
</dbReference>
<dbReference type="GO" id="GO:0030522">
    <property type="term" value="P:intracellular receptor signaling pathway"/>
    <property type="evidence" value="ECO:0000318"/>
    <property type="project" value="GO_Central"/>
</dbReference>
<dbReference type="GO" id="GO:0042953">
    <property type="term" value="P:lipoprotein transport"/>
    <property type="evidence" value="ECO:0000266"/>
    <property type="project" value="RGD"/>
</dbReference>
<dbReference type="GO" id="GO:0015909">
    <property type="term" value="P:long-chain fatty acid transport"/>
    <property type="evidence" value="ECO:0000266"/>
    <property type="project" value="RGD"/>
</dbReference>
<dbReference type="GO" id="GO:0030224">
    <property type="term" value="P:monocyte differentiation"/>
    <property type="evidence" value="ECO:0000266"/>
    <property type="project" value="RGD"/>
</dbReference>
<dbReference type="GO" id="GO:0042789">
    <property type="term" value="P:mRNA transcription by RNA polymerase II"/>
    <property type="evidence" value="ECO:0000266"/>
    <property type="project" value="RGD"/>
</dbReference>
<dbReference type="GO" id="GO:0002674">
    <property type="term" value="P:negative regulation of acute inflammatory response"/>
    <property type="evidence" value="ECO:0000315"/>
    <property type="project" value="RGD"/>
</dbReference>
<dbReference type="GO" id="GO:0016525">
    <property type="term" value="P:negative regulation of angiogenesis"/>
    <property type="evidence" value="ECO:0000266"/>
    <property type="project" value="RGD"/>
</dbReference>
<dbReference type="GO" id="GO:0043537">
    <property type="term" value="P:negative regulation of blood vessel endothelial cell migration"/>
    <property type="evidence" value="ECO:0000266"/>
    <property type="project" value="RGD"/>
</dbReference>
<dbReference type="GO" id="GO:0030514">
    <property type="term" value="P:negative regulation of BMP signaling pathway"/>
    <property type="evidence" value="ECO:0000266"/>
    <property type="project" value="RGD"/>
</dbReference>
<dbReference type="GO" id="GO:1903243">
    <property type="term" value="P:negative regulation of cardiac muscle hypertrophy in response to stress"/>
    <property type="evidence" value="ECO:0000314"/>
    <property type="project" value="BHF-UCL"/>
</dbReference>
<dbReference type="GO" id="GO:0030308">
    <property type="term" value="P:negative regulation of cell growth"/>
    <property type="evidence" value="ECO:0000315"/>
    <property type="project" value="RGD"/>
</dbReference>
<dbReference type="GO" id="GO:0008285">
    <property type="term" value="P:negative regulation of cell population proliferation"/>
    <property type="evidence" value="ECO:0000315"/>
    <property type="project" value="RGD"/>
</dbReference>
<dbReference type="GO" id="GO:1900077">
    <property type="term" value="P:negative regulation of cellular response to insulin stimulus"/>
    <property type="evidence" value="ECO:0000266"/>
    <property type="project" value="RGD"/>
</dbReference>
<dbReference type="GO" id="GO:1903845">
    <property type="term" value="P:negative regulation of cellular response to transforming growth factor beta stimulus"/>
    <property type="evidence" value="ECO:0000266"/>
    <property type="project" value="RGD"/>
</dbReference>
<dbReference type="GO" id="GO:0010887">
    <property type="term" value="P:negative regulation of cholesterol storage"/>
    <property type="evidence" value="ECO:0000266"/>
    <property type="project" value="RGD"/>
</dbReference>
<dbReference type="GO" id="GO:0032966">
    <property type="term" value="P:negative regulation of collagen biosynthetic process"/>
    <property type="evidence" value="ECO:0000315"/>
    <property type="project" value="RGD"/>
</dbReference>
<dbReference type="GO" id="GO:1904597">
    <property type="term" value="P:negative regulation of connective tissue replacement involved in inflammatory response wound healing"/>
    <property type="evidence" value="ECO:0000314"/>
    <property type="project" value="BHF-UCL"/>
</dbReference>
<dbReference type="GO" id="GO:0001818">
    <property type="term" value="P:negative regulation of cytokine production"/>
    <property type="evidence" value="ECO:0000266"/>
    <property type="project" value="RGD"/>
</dbReference>
<dbReference type="GO" id="GO:0045892">
    <property type="term" value="P:negative regulation of DNA-templated transcription"/>
    <property type="evidence" value="ECO:0000266"/>
    <property type="project" value="RGD"/>
</dbReference>
<dbReference type="GO" id="GO:0050680">
    <property type="term" value="P:negative regulation of epithelial cell proliferation"/>
    <property type="evidence" value="ECO:0000266"/>
    <property type="project" value="RGD"/>
</dbReference>
<dbReference type="GO" id="GO:1901202">
    <property type="term" value="P:negative regulation of extracellular matrix assembly"/>
    <property type="evidence" value="ECO:0000266"/>
    <property type="project" value="RGD"/>
</dbReference>
<dbReference type="GO" id="GO:0010629">
    <property type="term" value="P:negative regulation of gene expression"/>
    <property type="evidence" value="ECO:0000316"/>
    <property type="project" value="BHF-UCL"/>
</dbReference>
<dbReference type="GO" id="GO:0050728">
    <property type="term" value="P:negative regulation of inflammatory response"/>
    <property type="evidence" value="ECO:0000318"/>
    <property type="project" value="GO_Central"/>
</dbReference>
<dbReference type="GO" id="GO:0010888">
    <property type="term" value="P:negative regulation of lipid storage"/>
    <property type="evidence" value="ECO:0000314"/>
    <property type="project" value="BHF-UCL"/>
</dbReference>
<dbReference type="GO" id="GO:0010745">
    <property type="term" value="P:negative regulation of macrophage derived foam cell differentiation"/>
    <property type="evidence" value="ECO:0000266"/>
    <property type="project" value="RGD"/>
</dbReference>
<dbReference type="GO" id="GO:0043409">
    <property type="term" value="P:negative regulation of MAPK cascade"/>
    <property type="evidence" value="ECO:0000266"/>
    <property type="project" value="RGD"/>
</dbReference>
<dbReference type="GO" id="GO:1903979">
    <property type="term" value="P:negative regulation of microglial cell activation"/>
    <property type="evidence" value="ECO:0000266"/>
    <property type="project" value="RGD"/>
</dbReference>
<dbReference type="GO" id="GO:1902894">
    <property type="term" value="P:negative regulation of miRNA transcription"/>
    <property type="evidence" value="ECO:0000266"/>
    <property type="project" value="RGD"/>
</dbReference>
<dbReference type="GO" id="GO:0090258">
    <property type="term" value="P:negative regulation of mitochondrial fission"/>
    <property type="evidence" value="ECO:0000266"/>
    <property type="project" value="RGD"/>
</dbReference>
<dbReference type="GO" id="GO:0150079">
    <property type="term" value="P:negative regulation of neuroinflammatory response"/>
    <property type="evidence" value="ECO:0000266"/>
    <property type="project" value="RGD"/>
</dbReference>
<dbReference type="GO" id="GO:0045668">
    <property type="term" value="P:negative regulation of osteoblast differentiation"/>
    <property type="evidence" value="ECO:0000266"/>
    <property type="project" value="RGD"/>
</dbReference>
<dbReference type="GO" id="GO:2000230">
    <property type="term" value="P:negative regulation of pancreatic stellate cell proliferation"/>
    <property type="evidence" value="ECO:0000315"/>
    <property type="project" value="RGD"/>
</dbReference>
<dbReference type="GO" id="GO:0090278">
    <property type="term" value="P:negative regulation of peptide hormone secretion"/>
    <property type="evidence" value="ECO:0000266"/>
    <property type="project" value="RGD"/>
</dbReference>
<dbReference type="GO" id="GO:1904893">
    <property type="term" value="P:negative regulation of receptor signaling pathway via STAT"/>
    <property type="evidence" value="ECO:0000266"/>
    <property type="project" value="RGD"/>
</dbReference>
<dbReference type="GO" id="GO:0060392">
    <property type="term" value="P:negative regulation of SMAD protein signal transduction"/>
    <property type="evidence" value="ECO:0000266"/>
    <property type="project" value="RGD"/>
</dbReference>
<dbReference type="GO" id="GO:0014912">
    <property type="term" value="P:negative regulation of smooth muscle cell migration"/>
    <property type="evidence" value="ECO:0000266"/>
    <property type="project" value="RGD"/>
</dbReference>
<dbReference type="GO" id="GO:0048662">
    <property type="term" value="P:negative regulation of smooth muscle cell proliferation"/>
    <property type="evidence" value="ECO:0000316"/>
    <property type="project" value="BHF-UCL"/>
</dbReference>
<dbReference type="GO" id="GO:0000122">
    <property type="term" value="P:negative regulation of transcription by RNA polymerase II"/>
    <property type="evidence" value="ECO:0000266"/>
    <property type="project" value="RGD"/>
</dbReference>
<dbReference type="GO" id="GO:0030512">
    <property type="term" value="P:negative regulation of transforming growth factor beta receptor signaling pathway"/>
    <property type="evidence" value="ECO:0000266"/>
    <property type="project" value="RGD"/>
</dbReference>
<dbReference type="GO" id="GO:0060336">
    <property type="term" value="P:negative regulation of type II interferon-mediated signaling pathway"/>
    <property type="evidence" value="ECO:0000266"/>
    <property type="project" value="RGD"/>
</dbReference>
<dbReference type="GO" id="GO:1904706">
    <property type="term" value="P:negative regulation of vascular associated smooth muscle cell proliferation"/>
    <property type="evidence" value="ECO:0000266"/>
    <property type="project" value="RGD"/>
</dbReference>
<dbReference type="GO" id="GO:1905563">
    <property type="term" value="P:negative regulation of vascular endothelial cell proliferation"/>
    <property type="evidence" value="ECO:0000266"/>
    <property type="project" value="RGD"/>
</dbReference>
<dbReference type="GO" id="GO:0035357">
    <property type="term" value="P:peroxisome proliferator activated receptor signaling pathway"/>
    <property type="evidence" value="ECO:0000250"/>
    <property type="project" value="UniProtKB"/>
</dbReference>
<dbReference type="GO" id="GO:0001890">
    <property type="term" value="P:placenta development"/>
    <property type="evidence" value="ECO:0000266"/>
    <property type="project" value="RGD"/>
</dbReference>
<dbReference type="GO" id="GO:0070165">
    <property type="term" value="P:positive regulation of adiponectin secretion"/>
    <property type="evidence" value="ECO:0000314"/>
    <property type="project" value="BHF-UCL"/>
</dbReference>
<dbReference type="GO" id="GO:1904179">
    <property type="term" value="P:positive regulation of adipose tissue development"/>
    <property type="evidence" value="ECO:0000266"/>
    <property type="project" value="RGD"/>
</dbReference>
<dbReference type="GO" id="GO:0043065">
    <property type="term" value="P:positive regulation of apoptotic process"/>
    <property type="evidence" value="ECO:0000315"/>
    <property type="project" value="RGD"/>
</dbReference>
<dbReference type="GO" id="GO:2001235">
    <property type="term" value="P:positive regulation of apoptotic signaling pathway"/>
    <property type="evidence" value="ECO:0000266"/>
    <property type="project" value="RGD"/>
</dbReference>
<dbReference type="GO" id="GO:0010875">
    <property type="term" value="P:positive regulation of cholesterol efflux"/>
    <property type="evidence" value="ECO:0000266"/>
    <property type="project" value="RGD"/>
</dbReference>
<dbReference type="GO" id="GO:0032376">
    <property type="term" value="P:positive regulation of cholesterol transport"/>
    <property type="evidence" value="ECO:0000266"/>
    <property type="project" value="RGD"/>
</dbReference>
<dbReference type="GO" id="GO:0045893">
    <property type="term" value="P:positive regulation of DNA-templated transcription"/>
    <property type="evidence" value="ECO:0000250"/>
    <property type="project" value="UniProtKB"/>
</dbReference>
<dbReference type="GO" id="GO:0045600">
    <property type="term" value="P:positive regulation of fat cell differentiation"/>
    <property type="evidence" value="ECO:0000315"/>
    <property type="project" value="ARUK-UCL"/>
</dbReference>
<dbReference type="GO" id="GO:0045923">
    <property type="term" value="P:positive regulation of fatty acid metabolic process"/>
    <property type="evidence" value="ECO:0000318"/>
    <property type="project" value="GO_Central"/>
</dbReference>
<dbReference type="GO" id="GO:0046321">
    <property type="term" value="P:positive regulation of fatty acid oxidation"/>
    <property type="evidence" value="ECO:0000315"/>
    <property type="project" value="RGD"/>
</dbReference>
<dbReference type="GO" id="GO:0010628">
    <property type="term" value="P:positive regulation of gene expression"/>
    <property type="evidence" value="ECO:0000266"/>
    <property type="project" value="RGD"/>
</dbReference>
<dbReference type="GO" id="GO:0032385">
    <property type="term" value="P:positive regulation of intracellular cholesterol transport"/>
    <property type="evidence" value="ECO:0000266"/>
    <property type="project" value="RGD"/>
</dbReference>
<dbReference type="GO" id="GO:1902895">
    <property type="term" value="P:positive regulation of miRNA transcription"/>
    <property type="evidence" value="ECO:0000266"/>
    <property type="project" value="RGD"/>
</dbReference>
<dbReference type="GO" id="GO:0048714">
    <property type="term" value="P:positive regulation of oligodendrocyte differentiation"/>
    <property type="evidence" value="ECO:0000315"/>
    <property type="project" value="RGD"/>
</dbReference>
<dbReference type="GO" id="GO:0060100">
    <property type="term" value="P:positive regulation of phagocytosis, engulfment"/>
    <property type="evidence" value="ECO:0000315"/>
    <property type="project" value="RGD"/>
</dbReference>
<dbReference type="GO" id="GO:0031394">
    <property type="term" value="P:positive regulation of prostaglandin biosynthetic process"/>
    <property type="evidence" value="ECO:0000266"/>
    <property type="project" value="RGD"/>
</dbReference>
<dbReference type="GO" id="GO:0050714">
    <property type="term" value="P:positive regulation of protein secretion"/>
    <property type="evidence" value="ECO:0000266"/>
    <property type="project" value="RGD"/>
</dbReference>
<dbReference type="GO" id="GO:0060391">
    <property type="term" value="P:positive regulation of SMAD protein signal transduction"/>
    <property type="evidence" value="ECO:0000266"/>
    <property type="project" value="RGD"/>
</dbReference>
<dbReference type="GO" id="GO:0045944">
    <property type="term" value="P:positive regulation of transcription by RNA polymerase II"/>
    <property type="evidence" value="ECO:0000314"/>
    <property type="project" value="BHF-UCL"/>
</dbReference>
<dbReference type="GO" id="GO:1905461">
    <property type="term" value="P:positive regulation of vascular associated smooth muscle cell apoptotic process"/>
    <property type="evidence" value="ECO:0000266"/>
    <property type="project" value="RGD"/>
</dbReference>
<dbReference type="GO" id="GO:0008217">
    <property type="term" value="P:regulation of blood pressure"/>
    <property type="evidence" value="ECO:0000266"/>
    <property type="project" value="RGD"/>
</dbReference>
<dbReference type="GO" id="GO:0042752">
    <property type="term" value="P:regulation of circadian rhythm"/>
    <property type="evidence" value="ECO:0000250"/>
    <property type="project" value="UniProtKB"/>
</dbReference>
<dbReference type="GO" id="GO:0006355">
    <property type="term" value="P:regulation of DNA-templated transcription"/>
    <property type="evidence" value="ECO:0000266"/>
    <property type="project" value="RGD"/>
</dbReference>
<dbReference type="GO" id="GO:0045598">
    <property type="term" value="P:regulation of fat cell differentiation"/>
    <property type="evidence" value="ECO:0000314"/>
    <property type="project" value="RGD"/>
</dbReference>
<dbReference type="GO" id="GO:0010468">
    <property type="term" value="P:regulation of gene expression"/>
    <property type="evidence" value="ECO:0000266"/>
    <property type="project" value="RGD"/>
</dbReference>
<dbReference type="GO" id="GO:0019216">
    <property type="term" value="P:regulation of lipid metabolic process"/>
    <property type="evidence" value="ECO:0000315"/>
    <property type="project" value="RGD"/>
</dbReference>
<dbReference type="GO" id="GO:1903076">
    <property type="term" value="P:regulation of protein localization to plasma membrane"/>
    <property type="evidence" value="ECO:0000266"/>
    <property type="project" value="RGD"/>
</dbReference>
<dbReference type="GO" id="GO:0006357">
    <property type="term" value="P:regulation of transcription by RNA polymerase II"/>
    <property type="evidence" value="ECO:0000315"/>
    <property type="project" value="RGD"/>
</dbReference>
<dbReference type="GO" id="GO:0031000">
    <property type="term" value="P:response to caffeine"/>
    <property type="evidence" value="ECO:0000270"/>
    <property type="project" value="RGD"/>
</dbReference>
<dbReference type="GO" id="GO:0002021">
    <property type="term" value="P:response to dietary excess"/>
    <property type="evidence" value="ECO:0000266"/>
    <property type="project" value="RGD"/>
</dbReference>
<dbReference type="GO" id="GO:0043627">
    <property type="term" value="P:response to estrogen"/>
    <property type="evidence" value="ECO:0000270"/>
    <property type="project" value="RGD"/>
</dbReference>
<dbReference type="GO" id="GO:0032094">
    <property type="term" value="P:response to food"/>
    <property type="evidence" value="ECO:0000266"/>
    <property type="project" value="RGD"/>
</dbReference>
<dbReference type="GO" id="GO:0035902">
    <property type="term" value="P:response to immobilization stress"/>
    <property type="evidence" value="ECO:0000270"/>
    <property type="project" value="RGD"/>
</dbReference>
<dbReference type="GO" id="GO:0009416">
    <property type="term" value="P:response to light stimulus"/>
    <property type="evidence" value="ECO:0000266"/>
    <property type="project" value="RGD"/>
</dbReference>
<dbReference type="GO" id="GO:0070543">
    <property type="term" value="P:response to linoleic acid"/>
    <property type="evidence" value="ECO:0000270"/>
    <property type="project" value="RGD"/>
</dbReference>
<dbReference type="GO" id="GO:0033993">
    <property type="term" value="P:response to lipid"/>
    <property type="evidence" value="ECO:0000270"/>
    <property type="project" value="RGD"/>
</dbReference>
<dbReference type="GO" id="GO:0009612">
    <property type="term" value="P:response to mechanical stimulus"/>
    <property type="evidence" value="ECO:0000270"/>
    <property type="project" value="RGD"/>
</dbReference>
<dbReference type="GO" id="GO:0042594">
    <property type="term" value="P:response to starvation"/>
    <property type="evidence" value="ECO:0000270"/>
    <property type="project" value="RGD"/>
</dbReference>
<dbReference type="GO" id="GO:0033189">
    <property type="term" value="P:response to vitamin A"/>
    <property type="evidence" value="ECO:0000270"/>
    <property type="project" value="RGD"/>
</dbReference>
<dbReference type="GO" id="GO:0009410">
    <property type="term" value="P:response to xenobiotic stimulus"/>
    <property type="evidence" value="ECO:0000270"/>
    <property type="project" value="RGD"/>
</dbReference>
<dbReference type="GO" id="GO:0048384">
    <property type="term" value="P:retinoic acid receptor signaling pathway"/>
    <property type="evidence" value="ECO:0000250"/>
    <property type="project" value="UniProtKB"/>
</dbReference>
<dbReference type="GO" id="GO:0048511">
    <property type="term" value="P:rhythmic process"/>
    <property type="evidence" value="ECO:0007669"/>
    <property type="project" value="UniProtKB-KW"/>
</dbReference>
<dbReference type="GO" id="GO:0007165">
    <property type="term" value="P:signal transduction"/>
    <property type="evidence" value="ECO:0000266"/>
    <property type="project" value="RGD"/>
</dbReference>
<dbReference type="GO" id="GO:0050872">
    <property type="term" value="P:white fat cell differentiation"/>
    <property type="evidence" value="ECO:0000266"/>
    <property type="project" value="RGD"/>
</dbReference>
<dbReference type="GO" id="GO:0002246">
    <property type="term" value="P:wound healing involved in inflammatory response"/>
    <property type="evidence" value="ECO:0000266"/>
    <property type="project" value="RGD"/>
</dbReference>
<dbReference type="CDD" id="cd06965">
    <property type="entry name" value="NR_DBD_Ppar"/>
    <property type="match status" value="1"/>
</dbReference>
<dbReference type="CDD" id="cd06932">
    <property type="entry name" value="NR_LBD_PPAR"/>
    <property type="match status" value="1"/>
</dbReference>
<dbReference type="FunFam" id="1.10.565.10:FF:000017">
    <property type="entry name" value="Peroxisome proliferator-activated receptor gamma"/>
    <property type="match status" value="1"/>
</dbReference>
<dbReference type="FunFam" id="3.30.50.10:FF:000010">
    <property type="entry name" value="Peroxisome proliferator-activated receptor gamma"/>
    <property type="match status" value="1"/>
</dbReference>
<dbReference type="Gene3D" id="3.30.50.10">
    <property type="entry name" value="Erythroid Transcription Factor GATA-1, subunit A"/>
    <property type="match status" value="1"/>
</dbReference>
<dbReference type="Gene3D" id="1.10.565.10">
    <property type="entry name" value="Retinoid X Receptor"/>
    <property type="match status" value="1"/>
</dbReference>
<dbReference type="InterPro" id="IPR003074">
    <property type="entry name" value="1Cnucl_rcpt"/>
</dbReference>
<dbReference type="InterPro" id="IPR035500">
    <property type="entry name" value="NHR-like_dom_sf"/>
</dbReference>
<dbReference type="InterPro" id="IPR000536">
    <property type="entry name" value="Nucl_hrmn_rcpt_lig-bd"/>
</dbReference>
<dbReference type="InterPro" id="IPR050234">
    <property type="entry name" value="Nuclear_hormone_rcpt_NR1"/>
</dbReference>
<dbReference type="InterPro" id="IPR001723">
    <property type="entry name" value="Nuclear_hrmn_rcpt"/>
</dbReference>
<dbReference type="InterPro" id="IPR003077">
    <property type="entry name" value="PPAR-gamma"/>
</dbReference>
<dbReference type="InterPro" id="IPR022590">
    <property type="entry name" value="PPARgamma_N"/>
</dbReference>
<dbReference type="InterPro" id="IPR001628">
    <property type="entry name" value="Znf_hrmn_rcpt"/>
</dbReference>
<dbReference type="InterPro" id="IPR013088">
    <property type="entry name" value="Znf_NHR/GATA"/>
</dbReference>
<dbReference type="PANTHER" id="PTHR24082">
    <property type="entry name" value="NUCLEAR HORMONE RECEPTOR"/>
    <property type="match status" value="1"/>
</dbReference>
<dbReference type="PANTHER" id="PTHR24082:SF488">
    <property type="entry name" value="PEROXISOME PROLIFERATOR-ACTIVATED RECEPTOR GAMMA"/>
    <property type="match status" value="1"/>
</dbReference>
<dbReference type="Pfam" id="PF00104">
    <property type="entry name" value="Hormone_recep"/>
    <property type="match status" value="1"/>
</dbReference>
<dbReference type="Pfam" id="PF12577">
    <property type="entry name" value="PPARgamma_N"/>
    <property type="match status" value="1"/>
</dbReference>
<dbReference type="Pfam" id="PF00105">
    <property type="entry name" value="zf-C4"/>
    <property type="match status" value="1"/>
</dbReference>
<dbReference type="PRINTS" id="PR01288">
    <property type="entry name" value="PROXISOMEPAR"/>
</dbReference>
<dbReference type="PRINTS" id="PR01291">
    <property type="entry name" value="PROXISOMPAGR"/>
</dbReference>
<dbReference type="PRINTS" id="PR00398">
    <property type="entry name" value="STRDHORMONER"/>
</dbReference>
<dbReference type="PRINTS" id="PR00047">
    <property type="entry name" value="STROIDFINGER"/>
</dbReference>
<dbReference type="SMART" id="SM00430">
    <property type="entry name" value="HOLI"/>
    <property type="match status" value="1"/>
</dbReference>
<dbReference type="SMART" id="SM00399">
    <property type="entry name" value="ZnF_C4"/>
    <property type="match status" value="1"/>
</dbReference>
<dbReference type="SUPFAM" id="SSF57716">
    <property type="entry name" value="Glucocorticoid receptor-like (DNA-binding domain)"/>
    <property type="match status" value="1"/>
</dbReference>
<dbReference type="SUPFAM" id="SSF48508">
    <property type="entry name" value="Nuclear receptor ligand-binding domain"/>
    <property type="match status" value="1"/>
</dbReference>
<dbReference type="PROSITE" id="PS51843">
    <property type="entry name" value="NR_LBD"/>
    <property type="match status" value="1"/>
</dbReference>
<dbReference type="PROSITE" id="PS00031">
    <property type="entry name" value="NUCLEAR_REC_DBD_1"/>
    <property type="match status" value="1"/>
</dbReference>
<dbReference type="PROSITE" id="PS51030">
    <property type="entry name" value="NUCLEAR_REC_DBD_2"/>
    <property type="match status" value="1"/>
</dbReference>
<proteinExistence type="evidence at protein level"/>
<organism>
    <name type="scientific">Rattus norvegicus</name>
    <name type="common">Rat</name>
    <dbReference type="NCBI Taxonomy" id="10116"/>
    <lineage>
        <taxon>Eukaryota</taxon>
        <taxon>Metazoa</taxon>
        <taxon>Chordata</taxon>
        <taxon>Craniata</taxon>
        <taxon>Vertebrata</taxon>
        <taxon>Euteleostomi</taxon>
        <taxon>Mammalia</taxon>
        <taxon>Eutheria</taxon>
        <taxon>Euarchontoglires</taxon>
        <taxon>Glires</taxon>
        <taxon>Rodentia</taxon>
        <taxon>Myomorpha</taxon>
        <taxon>Muroidea</taxon>
        <taxon>Muridae</taxon>
        <taxon>Murinae</taxon>
        <taxon>Rattus</taxon>
    </lineage>
</organism>
<comment type="function">
    <text evidence="2 3">Nuclear receptor that binds peroxisome proliferators such as hypolipidemic drugs and fatty acids. Once activated by a ligand, the nuclear receptor binds to DNA specific PPAR response elements (PPRE) and modulates the transcription of its target genes, such as acyl-CoA oxidase. It therefore controls the peroxisomal beta-oxidation pathway of fatty acids. Key regulator of adipocyte differentiation and glucose homeostasis. ARF6 acts as a key regulator of the tissue-specific adipocyte P2 (aP2) enhancer. Acts as a critical regulator of gut homeostasis by suppressing NF-kappa-B-mediated pro-inflammatory responses. Plays a role in the regulation of cardiovascular circadian rhythms by regulating the transcription of BMAL1 in the blood vessels.</text>
</comment>
<comment type="activity regulation">
    <text evidence="1">PDPK1 activates its transcriptional activity independently of its kinase activity.</text>
</comment>
<comment type="subunit">
    <text evidence="2 3">Interacts with FOXO1 (acetylated form) (By similarity). Heterodimer with other nuclear receptors, such as RXRA. The heterodimer with the retinoic acid receptor RXRA is called adipocyte-specific transcription factor ARF6. Interacts with NCOA6 coactivator, leading to a strong increase in transcription of target genes. Interacts with coactivator PPARBP, leading to a mild increase in transcription of target genes. Interacts with NOCA7 in a ligand-inducible manner. Interacts with NCOA1 and NCOA2 LXXLL motifs. Interacts with ASXL1, ASXL2, DNTTIP2, FAM120B, MAP2K1/MEK1, NR0B2, PDPK1, PRDM16, PRMT2 and TGFB1I1. Interacts (when activated by agonist) with PPP5C. Interacts with HELZ2 and THRAP3; the interaction stimulates the transcriptional activity of PPARG. Interacts with PER2, the interaction is ligand dependent and blocks PPARG recruitment to target promoters. Interacts with NOCT. Interacts with ACTN4. Interacts (when in the liganded conformation) with GPS2 (By similarity). Interacts with CRY1 and CRY2 in a ligand-dependent manner (By similarity). In the absence of hormonal ligand, interacts with TACC1 (By similarity). In macrophages, interacts with PAQR3 and STUB1; the interactions promote PPARG poylubiquitination and STUB1-mediated degradation (By similarity).</text>
</comment>
<comment type="subcellular location">
    <subcellularLocation>
        <location evidence="4">Nucleus</location>
    </subcellularLocation>
    <subcellularLocation>
        <location evidence="1">Cytoplasm</location>
    </subcellularLocation>
    <text evidence="1">Redistributed from the nucleus to the cytosol through a MAP2K1/MEK1-dependent manner. NOCT enhances its nuclear translocation (By similarity).</text>
</comment>
<comment type="alternative products">
    <event type="alternative splicing"/>
    <isoform>
        <id>O88275-1</id>
        <name>2</name>
        <sequence type="displayed"/>
    </isoform>
    <isoform>
        <id>O88275-2</id>
        <name>1</name>
        <sequence type="described" ref="VSP_003649"/>
    </isoform>
    <text>Additional isoforms seem to exist.</text>
</comment>
<comment type="tissue specificity">
    <text>Highest expression in adipose tissue.</text>
</comment>
<comment type="domain">
    <text evidence="2">The 9aaTAD motif is a transactivation domain present in a large number of yeast and animal transcription factors.</text>
</comment>
<comment type="PTM">
    <text evidence="6 7 8">Phosphorylated by MAPK. The phosphorylation inhibits PPAR gamma activity.</text>
</comment>
<comment type="PTM">
    <text evidence="3">O-GlcNAcylation at Thr-84 reduces transcriptional activity in adipocytes.</text>
</comment>
<comment type="PTM">
    <text evidence="2">Phosphorylated at basal conditions and dephosphorylated when treated with the ligand. May be dephosphorylated by PPP5C. The phosphorylated form may be inactive and dephosphorylation at induces adipogenic activity (By similarity).</text>
</comment>
<comment type="PTM">
    <text evidence="2 3">Ubiquitinated by E3 ubiquitin-protein ligase complex containing FBXO9; leading to proteasomal degradation (By similarity). Ubiquitinated at Lys-252 by TRIM55 leading to proteasomal degradation (By similarity). Ubiquitinated by E3 ubiquitin-protein ligase STUB1/CHIP; leading to proteasomal degradation (By similarity).</text>
</comment>
<comment type="similarity">
    <text evidence="12">Belongs to the nuclear hormone receptor family. NR1 subfamily.</text>
</comment>
<keyword id="KW-0010">Activator</keyword>
<keyword id="KW-0025">Alternative splicing</keyword>
<keyword id="KW-0090">Biological rhythms</keyword>
<keyword id="KW-0963">Cytoplasm</keyword>
<keyword id="KW-0238">DNA-binding</keyword>
<keyword id="KW-0325">Glycoprotein</keyword>
<keyword id="KW-1017">Isopeptide bond</keyword>
<keyword id="KW-0479">Metal-binding</keyword>
<keyword id="KW-0539">Nucleus</keyword>
<keyword id="KW-0597">Phosphoprotein</keyword>
<keyword id="KW-0675">Receptor</keyword>
<keyword id="KW-1185">Reference proteome</keyword>
<keyword id="KW-0804">Transcription</keyword>
<keyword id="KW-0805">Transcription regulation</keyword>
<keyword id="KW-0832">Ubl conjugation</keyword>
<keyword id="KW-0862">Zinc</keyword>
<keyword id="KW-0863">Zinc-finger</keyword>
<protein>
    <recommendedName>
        <fullName>Peroxisome proliferator-activated receptor gamma</fullName>
        <shortName>PPAR-gamma</shortName>
    </recommendedName>
    <alternativeName>
        <fullName>Nuclear receptor subfamily 1 group C member 3</fullName>
    </alternativeName>
</protein>
<evidence type="ECO:0000250" key="1"/>
<evidence type="ECO:0000250" key="2">
    <source>
        <dbReference type="UniProtKB" id="P37231"/>
    </source>
</evidence>
<evidence type="ECO:0000250" key="3">
    <source>
        <dbReference type="UniProtKB" id="P37238"/>
    </source>
</evidence>
<evidence type="ECO:0000255" key="4">
    <source>
        <dbReference type="PROSITE-ProRule" id="PRU00407"/>
    </source>
</evidence>
<evidence type="ECO:0000255" key="5">
    <source>
        <dbReference type="PROSITE-ProRule" id="PRU01189"/>
    </source>
</evidence>
<evidence type="ECO:0000269" key="6">
    <source>
    </source>
</evidence>
<evidence type="ECO:0000269" key="7">
    <source>
    </source>
</evidence>
<evidence type="ECO:0000269" key="8">
    <source>
    </source>
</evidence>
<evidence type="ECO:0000303" key="9">
    <source>
    </source>
</evidence>
<evidence type="ECO:0000303" key="10">
    <source>
    </source>
</evidence>
<evidence type="ECO:0000303" key="11">
    <source ref="4"/>
</evidence>
<evidence type="ECO:0000305" key="12"/>
<accession>O88275</accession>
<accession>Q9QWG0</accession>
<accession>Q9R197</accession>
<sequence>MGETLGDPPVDPEHGAFADALPMSTSQEITMVDTEMPFWPTNFGISSVDLSVMDDHSHSFDIKPFTTVDFSSISAPHYEDIPFTRADPMVADYKYDLKLQEYQSAIKVEPASPPYYSEKTQLYNRPHEEPSNSLMAIECRVCGDKASGFHYGVHACEGCKGFFRRTIRLKLIYDRCDLNCRIHKKSRNKCQYCRFQKCLAVGMSHNAIRFGRMPQAEKEKLLAEISSDIDQLNPESADLRALAKHLYDSYIKSFPLTKAKARAILTGKTTDKSPFVIYDMNSLMMGEDKIKFKHITPLQEQSKEVAIRIFQGCQFRSVEAVQEITEYAKNIPGFINLDLNDQVTLLKYGVHEIIYTMLASLMNKDGVLISEGQGFMTREFLKSLRKPFGDFMEPKFEFAVKFNALELDDSDLAIFIAVIILSGDRPGLLNVKPIEDIQDNLLQALELQLKLNHPESSQLFAKVLQKMTDLRQIVTEHVQLLHVIKKTETDMSLHPLLQEIYKDLY</sequence>
<name>PPARG_RAT</name>
<gene>
    <name type="primary">Pparg</name>
    <name type="synonym">Nr1c3</name>
</gene>